<gene>
    <name type="ORF">B9K17.150</name>
    <name type="ORF">NCU10468</name>
</gene>
<keyword id="KW-0012">Acyltransferase</keyword>
<keyword id="KW-0028">Amino-acid biosynthesis</keyword>
<keyword id="KW-0055">Arginine biosynthesis</keyword>
<keyword id="KW-0068">Autocatalytic cleavage</keyword>
<keyword id="KW-0496">Mitochondrion</keyword>
<keyword id="KW-0511">Multifunctional enzyme</keyword>
<keyword id="KW-1185">Reference proteome</keyword>
<keyword id="KW-0808">Transferase</keyword>
<reference key="1">
    <citation type="journal article" date="2003" name="Nucleic Acids Res.">
        <title>What's in the genome of a filamentous fungus? Analysis of the Neurospora genome sequence.</title>
        <authorList>
            <person name="Mannhaupt G."/>
            <person name="Montrone C."/>
            <person name="Haase D."/>
            <person name="Mewes H.-W."/>
            <person name="Aign V."/>
            <person name="Hoheisel J.D."/>
            <person name="Fartmann B."/>
            <person name="Nyakatura G."/>
            <person name="Kempken F."/>
            <person name="Maier J."/>
            <person name="Schulte U."/>
        </authorList>
    </citation>
    <scope>NUCLEOTIDE SEQUENCE [LARGE SCALE GENOMIC DNA]</scope>
    <source>
        <strain>ATCC 24698 / 74-OR23-1A / CBS 708.71 / DSM 1257 / FGSC 987</strain>
    </source>
</reference>
<reference key="2">
    <citation type="journal article" date="2003" name="Nature">
        <title>The genome sequence of the filamentous fungus Neurospora crassa.</title>
        <authorList>
            <person name="Galagan J.E."/>
            <person name="Calvo S.E."/>
            <person name="Borkovich K.A."/>
            <person name="Selker E.U."/>
            <person name="Read N.D."/>
            <person name="Jaffe D.B."/>
            <person name="FitzHugh W."/>
            <person name="Ma L.-J."/>
            <person name="Smirnov S."/>
            <person name="Purcell S."/>
            <person name="Rehman B."/>
            <person name="Elkins T."/>
            <person name="Engels R."/>
            <person name="Wang S."/>
            <person name="Nielsen C.B."/>
            <person name="Butler J."/>
            <person name="Endrizzi M."/>
            <person name="Qui D."/>
            <person name="Ianakiev P."/>
            <person name="Bell-Pedersen D."/>
            <person name="Nelson M.A."/>
            <person name="Werner-Washburne M."/>
            <person name="Selitrennikoff C.P."/>
            <person name="Kinsey J.A."/>
            <person name="Braun E.L."/>
            <person name="Zelter A."/>
            <person name="Schulte U."/>
            <person name="Kothe G.O."/>
            <person name="Jedd G."/>
            <person name="Mewes H.-W."/>
            <person name="Staben C."/>
            <person name="Marcotte E."/>
            <person name="Greenberg D."/>
            <person name="Roy A."/>
            <person name="Foley K."/>
            <person name="Naylor J."/>
            <person name="Stange-Thomann N."/>
            <person name="Barrett R."/>
            <person name="Gnerre S."/>
            <person name="Kamal M."/>
            <person name="Kamvysselis M."/>
            <person name="Mauceli E.W."/>
            <person name="Bielke C."/>
            <person name="Rudd S."/>
            <person name="Frishman D."/>
            <person name="Krystofova S."/>
            <person name="Rasmussen C."/>
            <person name="Metzenberg R.L."/>
            <person name="Perkins D.D."/>
            <person name="Kroken S."/>
            <person name="Cogoni C."/>
            <person name="Macino G."/>
            <person name="Catcheside D.E.A."/>
            <person name="Li W."/>
            <person name="Pratt R.J."/>
            <person name="Osmani S.A."/>
            <person name="DeSouza C.P.C."/>
            <person name="Glass N.L."/>
            <person name="Orbach M.J."/>
            <person name="Berglund J.A."/>
            <person name="Voelker R."/>
            <person name="Yarden O."/>
            <person name="Plamann M."/>
            <person name="Seiler S."/>
            <person name="Dunlap J.C."/>
            <person name="Radford A."/>
            <person name="Aramayo R."/>
            <person name="Natvig D.O."/>
            <person name="Alex L.A."/>
            <person name="Mannhaupt G."/>
            <person name="Ebbole D.J."/>
            <person name="Freitag M."/>
            <person name="Paulsen I."/>
            <person name="Sachs M.S."/>
            <person name="Lander E.S."/>
            <person name="Nusbaum C."/>
            <person name="Birren B.W."/>
        </authorList>
    </citation>
    <scope>NUCLEOTIDE SEQUENCE [LARGE SCALE GENOMIC DNA]</scope>
    <source>
        <strain>ATCC 24698 / 74-OR23-1A / CBS 708.71 / DSM 1257 / FGSC 987</strain>
    </source>
</reference>
<evidence type="ECO:0000255" key="1">
    <source>
        <dbReference type="HAMAP-Rule" id="MF_03124"/>
    </source>
</evidence>
<evidence type="ECO:0000305" key="2"/>
<name>ARGJ_NEUCR</name>
<sequence>MESLNGCVLSQLRQSGAQVTRTLQKIQSRSYSAPVSGSIPAAKKKYVPTSGTYPLGFSASGINVGVKPKNTTKPDVCLVASDRPCAAAAVFTKNKFQAAPVTFSRSLLQKKGNQGIQGVVVNSGCANAVTGKGGLEDAGKMAQAADECFGQSESTLVMSTGVIGQRLPIEKITSNIPRAHKAMGSTHDHWLTAAKAICTTDTFPKLISRSFKLPSSPSVEYRIAGMTKGAGMIHPNMATLLGIIATDAPVSSTVLPAVLKHAVDRSFNSITIDGDTSTNDTVALLANGAAGGKEVVANTPDYDAFQTVLTDFSTDLAKLIVRDGEGATKFVTIRVVEAASEEAARKIASTIARSPLVKTALYGKDANWGRILCATGYSLVSEPGLPVNDVSEVVPEKTNVSFIPTDGTAELKLLVNGEPEQVDEARAAEILELEDLEILVRLGTGDKQATYWTCDYSHEYITINGDYRT</sequence>
<feature type="chain" id="PRO_0000398072" description="Arginine biosynthesis bifunctional protein ArgJ alpha chain" evidence="1">
    <location>
        <begin position="1"/>
        <end position="238"/>
    </location>
</feature>
<feature type="chain" id="PRO_0000398073" description="Arginine biosynthesis bifunctional protein ArgJ beta chain" evidence="1">
    <location>
        <begin position="239"/>
        <end position="469"/>
    </location>
</feature>
<feature type="active site" description="Nucleophile" evidence="1">
    <location>
        <position position="239"/>
    </location>
</feature>
<feature type="binding site" evidence="1">
    <location>
        <position position="199"/>
    </location>
    <ligand>
        <name>substrate</name>
    </ligand>
</feature>
<feature type="binding site" evidence="1">
    <location>
        <position position="228"/>
    </location>
    <ligand>
        <name>substrate</name>
    </ligand>
</feature>
<feature type="binding site" evidence="1">
    <location>
        <position position="239"/>
    </location>
    <ligand>
        <name>substrate</name>
    </ligand>
</feature>
<feature type="binding site" evidence="1">
    <location>
        <position position="325"/>
    </location>
    <ligand>
        <name>substrate</name>
    </ligand>
</feature>
<feature type="binding site" evidence="1">
    <location>
        <position position="464"/>
    </location>
    <ligand>
        <name>substrate</name>
    </ligand>
</feature>
<feature type="binding site" evidence="1">
    <location>
        <position position="469"/>
    </location>
    <ligand>
        <name>substrate</name>
    </ligand>
</feature>
<feature type="site" description="Involved in the stabilization of negative charge on the oxyanion by the formation of the oxyanion hole" evidence="1">
    <location>
        <position position="160"/>
    </location>
</feature>
<feature type="site" description="Involved in the stabilization of negative charge on the oxyanion by the formation of the oxyanion hole" evidence="1">
    <location>
        <position position="161"/>
    </location>
</feature>
<feature type="site" description="Cleavage; by autolysis" evidence="1">
    <location>
        <begin position="238"/>
        <end position="239"/>
    </location>
</feature>
<accession>A7UWD5</accession>
<accession>Q871X7</accession>
<proteinExistence type="inferred from homology"/>
<organism>
    <name type="scientific">Neurospora crassa (strain ATCC 24698 / 74-OR23-1A / CBS 708.71 / DSM 1257 / FGSC 987)</name>
    <dbReference type="NCBI Taxonomy" id="367110"/>
    <lineage>
        <taxon>Eukaryota</taxon>
        <taxon>Fungi</taxon>
        <taxon>Dikarya</taxon>
        <taxon>Ascomycota</taxon>
        <taxon>Pezizomycotina</taxon>
        <taxon>Sordariomycetes</taxon>
        <taxon>Sordariomycetidae</taxon>
        <taxon>Sordariales</taxon>
        <taxon>Sordariaceae</taxon>
        <taxon>Neurospora</taxon>
    </lineage>
</organism>
<comment type="function">
    <text evidence="1">Catalyzes two activities which are involved in the cyclic version of arginine biosynthesis: the synthesis of acetylglutamate from glutamate and acetyl-CoA, and of ornithine by transacetylation between acetylornithine and glutamate.</text>
</comment>
<comment type="catalytic activity">
    <reaction evidence="1">
        <text>N(2)-acetyl-L-ornithine + L-glutamate = N-acetyl-L-glutamate + L-ornithine</text>
        <dbReference type="Rhea" id="RHEA:15349"/>
        <dbReference type="ChEBI" id="CHEBI:29985"/>
        <dbReference type="ChEBI" id="CHEBI:44337"/>
        <dbReference type="ChEBI" id="CHEBI:46911"/>
        <dbReference type="ChEBI" id="CHEBI:57805"/>
        <dbReference type="EC" id="2.3.1.35"/>
    </reaction>
</comment>
<comment type="catalytic activity">
    <reaction evidence="1">
        <text>L-glutamate + acetyl-CoA = N-acetyl-L-glutamate + CoA + H(+)</text>
        <dbReference type="Rhea" id="RHEA:24292"/>
        <dbReference type="ChEBI" id="CHEBI:15378"/>
        <dbReference type="ChEBI" id="CHEBI:29985"/>
        <dbReference type="ChEBI" id="CHEBI:44337"/>
        <dbReference type="ChEBI" id="CHEBI:57287"/>
        <dbReference type="ChEBI" id="CHEBI:57288"/>
        <dbReference type="EC" id="2.3.1.1"/>
    </reaction>
</comment>
<comment type="pathway">
    <text evidence="1">Amino-acid biosynthesis; L-arginine biosynthesis; L-ornithine and N-acetyl-L-glutamate from L-glutamate and N(2)-acetyl-L-ornithine (cyclic): step 1/1.</text>
</comment>
<comment type="pathway">
    <text evidence="1">Amino-acid biosynthesis; L-arginine biosynthesis; N(2)-acetyl-L-ornithine from L-glutamate: step 1/4.</text>
</comment>
<comment type="subunit">
    <text evidence="1">Heterodimer of an alpha and a beta chain.</text>
</comment>
<comment type="subcellular location">
    <subcellularLocation>
        <location evidence="1">Mitochondrion matrix</location>
    </subcellularLocation>
</comment>
<comment type="PTM">
    <text evidence="1">The alpha and beta chains are autoproteolytically processed from a single precursor protein within the mitochondrion.</text>
</comment>
<comment type="miscellaneous">
    <text evidence="1">This protein may be expected to contain an N-terminal transit peptide but none has been predicted.</text>
</comment>
<comment type="similarity">
    <text evidence="1">Belongs to the ArgJ family.</text>
</comment>
<comment type="sequence caution" evidence="2">
    <conflict type="erroneous gene model prediction">
        <sequence resource="EMBL-CDS" id="CAD70860"/>
    </conflict>
</comment>
<dbReference type="EC" id="2.3.1.35" evidence="1"/>
<dbReference type="EC" id="2.3.1.1" evidence="1"/>
<dbReference type="EMBL" id="BX294016">
    <property type="protein sequence ID" value="CAD70860.1"/>
    <property type="status" value="ALT_SEQ"/>
    <property type="molecule type" value="Genomic_DNA"/>
</dbReference>
<dbReference type="EMBL" id="CM002240">
    <property type="protein sequence ID" value="EDO65225.1"/>
    <property type="molecule type" value="Genomic_DNA"/>
</dbReference>
<dbReference type="SMR" id="A7UWD5"/>
<dbReference type="FunCoup" id="A7UWD5">
    <property type="interactions" value="281"/>
</dbReference>
<dbReference type="STRING" id="367110.A7UWD5"/>
<dbReference type="MEROPS" id="T05.001"/>
<dbReference type="PaxDb" id="5141-EFNCRP00000004195"/>
<dbReference type="EnsemblFungi" id="EDO65225">
    <property type="protein sequence ID" value="EDO65225"/>
    <property type="gene ID" value="NCU10468"/>
</dbReference>
<dbReference type="KEGG" id="ncr:NCU10468"/>
<dbReference type="VEuPathDB" id="FungiDB:NCU10468"/>
<dbReference type="HOGENOM" id="CLU_027172_1_0_1"/>
<dbReference type="InParanoid" id="A7UWD5"/>
<dbReference type="OMA" id="WGRIVMA"/>
<dbReference type="OrthoDB" id="4199794at2759"/>
<dbReference type="UniPathway" id="UPA00068">
    <property type="reaction ID" value="UER00106"/>
</dbReference>
<dbReference type="UniPathway" id="UPA00068">
    <property type="reaction ID" value="UER00111"/>
</dbReference>
<dbReference type="Proteomes" id="UP000001805">
    <property type="component" value="Chromosome 2, Linkage Group V"/>
</dbReference>
<dbReference type="GO" id="GO:0005759">
    <property type="term" value="C:mitochondrial matrix"/>
    <property type="evidence" value="ECO:0000318"/>
    <property type="project" value="GO_Central"/>
</dbReference>
<dbReference type="GO" id="GO:0004358">
    <property type="term" value="F:glutamate N-acetyltransferase activity"/>
    <property type="evidence" value="ECO:0007669"/>
    <property type="project" value="UniProtKB-UniRule"/>
</dbReference>
<dbReference type="GO" id="GO:0004042">
    <property type="term" value="F:L-glutamate N-acetyltransferase activity"/>
    <property type="evidence" value="ECO:0000318"/>
    <property type="project" value="GO_Central"/>
</dbReference>
<dbReference type="GO" id="GO:0006526">
    <property type="term" value="P:L-arginine biosynthetic process"/>
    <property type="evidence" value="ECO:0007669"/>
    <property type="project" value="UniProtKB-UniRule"/>
</dbReference>
<dbReference type="GO" id="GO:0006592">
    <property type="term" value="P:ornithine biosynthetic process"/>
    <property type="evidence" value="ECO:0000318"/>
    <property type="project" value="GO_Central"/>
</dbReference>
<dbReference type="CDD" id="cd02152">
    <property type="entry name" value="OAT"/>
    <property type="match status" value="1"/>
</dbReference>
<dbReference type="FunFam" id="3.60.70.12:FF:000001">
    <property type="entry name" value="Arginine biosynthesis bifunctional protein ArgJ, chloroplastic"/>
    <property type="match status" value="1"/>
</dbReference>
<dbReference type="FunFam" id="3.10.20.340:FF:000002">
    <property type="entry name" value="Arginine biosynthesis bifunctional protein ArgJ, mitochondrial"/>
    <property type="match status" value="1"/>
</dbReference>
<dbReference type="FunFam" id="3.30.2330.10:FF:000001">
    <property type="entry name" value="Arginine biosynthesis bifunctional protein ArgJ, mitochondrial"/>
    <property type="match status" value="1"/>
</dbReference>
<dbReference type="Gene3D" id="3.30.2330.10">
    <property type="entry name" value="arginine biosynthesis bifunctional protein suprefamily"/>
    <property type="match status" value="1"/>
</dbReference>
<dbReference type="Gene3D" id="3.10.20.340">
    <property type="entry name" value="ArgJ beta chain, C-terminal domain"/>
    <property type="match status" value="1"/>
</dbReference>
<dbReference type="Gene3D" id="3.60.70.12">
    <property type="entry name" value="L-amino peptidase D-ALA esterase/amidase"/>
    <property type="match status" value="1"/>
</dbReference>
<dbReference type="HAMAP" id="MF_01106">
    <property type="entry name" value="ArgJ"/>
    <property type="match status" value="1"/>
</dbReference>
<dbReference type="InterPro" id="IPR002813">
    <property type="entry name" value="Arg_biosynth_ArgJ"/>
</dbReference>
<dbReference type="InterPro" id="IPR016117">
    <property type="entry name" value="ArgJ-like_dom_sf"/>
</dbReference>
<dbReference type="InterPro" id="IPR042195">
    <property type="entry name" value="ArgJ_beta_C"/>
</dbReference>
<dbReference type="NCBIfam" id="TIGR00120">
    <property type="entry name" value="ArgJ"/>
    <property type="match status" value="1"/>
</dbReference>
<dbReference type="NCBIfam" id="NF003802">
    <property type="entry name" value="PRK05388.1"/>
    <property type="match status" value="1"/>
</dbReference>
<dbReference type="PANTHER" id="PTHR23100">
    <property type="entry name" value="ARGININE BIOSYNTHESIS BIFUNCTIONAL PROTEIN ARGJ"/>
    <property type="match status" value="1"/>
</dbReference>
<dbReference type="PANTHER" id="PTHR23100:SF0">
    <property type="entry name" value="ARGININE BIOSYNTHESIS BIFUNCTIONAL PROTEIN ARGJ, MITOCHONDRIAL"/>
    <property type="match status" value="1"/>
</dbReference>
<dbReference type="Pfam" id="PF01960">
    <property type="entry name" value="ArgJ"/>
    <property type="match status" value="1"/>
</dbReference>
<dbReference type="SUPFAM" id="SSF56266">
    <property type="entry name" value="DmpA/ArgJ-like"/>
    <property type="match status" value="1"/>
</dbReference>
<protein>
    <recommendedName>
        <fullName evidence="1">Arginine biosynthesis bifunctional protein ArgJ, mitochondrial</fullName>
    </recommendedName>
    <domain>
        <recommendedName>
            <fullName evidence="1">Glutamate N-acetyltransferase</fullName>
            <shortName evidence="1">GAT</shortName>
            <ecNumber evidence="1">2.3.1.35</ecNumber>
        </recommendedName>
        <alternativeName>
            <fullName evidence="1">Ornithine acetyltransferase</fullName>
            <shortName evidence="1">OATase</shortName>
        </alternativeName>
        <alternativeName>
            <fullName evidence="1">Ornithine transacetylase</fullName>
        </alternativeName>
    </domain>
    <domain>
        <recommendedName>
            <fullName evidence="1">Amino-acid acetyltransferase</fullName>
            <ecNumber evidence="1">2.3.1.1</ecNumber>
        </recommendedName>
        <alternativeName>
            <fullName evidence="1">N-acetylglutamate synthase</fullName>
            <shortName evidence="1">AGS</shortName>
        </alternativeName>
    </domain>
    <component>
        <recommendedName>
            <fullName evidence="1">Arginine biosynthesis bifunctional protein ArgJ alpha chain</fullName>
        </recommendedName>
    </component>
    <component>
        <recommendedName>
            <fullName evidence="1">Arginine biosynthesis bifunctional protein ArgJ beta chain</fullName>
        </recommendedName>
    </component>
</protein>